<dbReference type="EMBL" id="AK172920">
    <property type="protein sequence ID" value="BAD32198.1"/>
    <property type="status" value="ALT_INIT"/>
    <property type="molecule type" value="Transcribed_RNA"/>
</dbReference>
<dbReference type="SMR" id="Q6A098"/>
<dbReference type="FunCoup" id="Q6A098">
    <property type="interactions" value="113"/>
</dbReference>
<dbReference type="STRING" id="10090.ENSMUSP00000055772"/>
<dbReference type="GlyGen" id="Q6A098">
    <property type="glycosylation" value="2 sites"/>
</dbReference>
<dbReference type="iPTMnet" id="Q6A098"/>
<dbReference type="PhosphoSitePlus" id="Q6A098"/>
<dbReference type="PaxDb" id="10090-ENSMUSP00000055772"/>
<dbReference type="ProteomicsDB" id="255339"/>
<dbReference type="Pumba" id="Q6A098"/>
<dbReference type="AGR" id="MGI:1917604"/>
<dbReference type="MGI" id="MGI:1917604">
    <property type="gene designation" value="Secisbp2l"/>
</dbReference>
<dbReference type="eggNOG" id="ENOG502QUP4">
    <property type="taxonomic scope" value="Eukaryota"/>
</dbReference>
<dbReference type="InParanoid" id="Q6A098"/>
<dbReference type="ChiTaRS" id="Secisbp2l">
    <property type="organism name" value="mouse"/>
</dbReference>
<dbReference type="PRO" id="PR:Q6A098"/>
<dbReference type="Proteomes" id="UP000000589">
    <property type="component" value="Unplaced"/>
</dbReference>
<dbReference type="RNAct" id="Q6A098">
    <property type="molecule type" value="protein"/>
</dbReference>
<dbReference type="GO" id="GO:0035368">
    <property type="term" value="F:selenocysteine insertion sequence binding"/>
    <property type="evidence" value="ECO:0007669"/>
    <property type="project" value="InterPro"/>
</dbReference>
<dbReference type="FunFam" id="3.30.1330.30:FF:000004">
    <property type="entry name" value="selenocysteine insertion sequence-binding protein 2"/>
    <property type="match status" value="1"/>
</dbReference>
<dbReference type="Gene3D" id="3.30.1330.30">
    <property type="match status" value="1"/>
</dbReference>
<dbReference type="InterPro" id="IPR029064">
    <property type="entry name" value="Ribosomal_eL30-like_sf"/>
</dbReference>
<dbReference type="InterPro" id="IPR004038">
    <property type="entry name" value="Ribosomal_eL8/eL30/eS12/Gad45"/>
</dbReference>
<dbReference type="InterPro" id="IPR040051">
    <property type="entry name" value="SECISBP2"/>
</dbReference>
<dbReference type="PANTHER" id="PTHR13284">
    <property type="entry name" value="GH01354P"/>
    <property type="match status" value="1"/>
</dbReference>
<dbReference type="PANTHER" id="PTHR13284:SF10">
    <property type="entry name" value="SELENOCYSTEINE INSERTION SEQUENCE-BINDING PROTEIN 2-LIKE"/>
    <property type="match status" value="1"/>
</dbReference>
<dbReference type="Pfam" id="PF01248">
    <property type="entry name" value="Ribosomal_L7Ae"/>
    <property type="match status" value="1"/>
</dbReference>
<dbReference type="SUPFAM" id="SSF55315">
    <property type="entry name" value="L30e-like"/>
    <property type="match status" value="1"/>
</dbReference>
<reference key="1">
    <citation type="journal article" date="2004" name="DNA Res.">
        <title>Prediction of the coding sequences of mouse homologues of KIAA gene: IV. The complete nucleotide sequences of 500 mouse KIAA-homologous cDNAs identified by screening of terminal sequences of cDNA clones randomly sampled from size-fractionated libraries.</title>
        <authorList>
            <person name="Okazaki N."/>
            <person name="Kikuno R."/>
            <person name="Ohara R."/>
            <person name="Inamoto S."/>
            <person name="Koseki H."/>
            <person name="Hiraoka S."/>
            <person name="Saga Y."/>
            <person name="Seino S."/>
            <person name="Nishimura M."/>
            <person name="Kaisho T."/>
            <person name="Hoshino K."/>
            <person name="Kitamura H."/>
            <person name="Nagase T."/>
            <person name="Ohara O."/>
            <person name="Koga H."/>
        </authorList>
    </citation>
    <scope>NUCLEOTIDE SEQUENCE [LARGE SCALE MRNA]</scope>
    <source>
        <tissue>Pancreatic islet</tissue>
    </source>
</reference>
<reference key="2">
    <citation type="journal article" date="2007" name="Proc. Natl. Acad. Sci. U.S.A.">
        <title>Large-scale phosphorylation analysis of mouse liver.</title>
        <authorList>
            <person name="Villen J."/>
            <person name="Beausoleil S.A."/>
            <person name="Gerber S.A."/>
            <person name="Gygi S.P."/>
        </authorList>
    </citation>
    <scope>PHOSPHORYLATION [LARGE SCALE ANALYSIS] AT SER-276</scope>
    <scope>IDENTIFICATION BY MASS SPECTROMETRY [LARGE SCALE ANALYSIS]</scope>
    <source>
        <tissue>Liver</tissue>
    </source>
</reference>
<reference key="3">
    <citation type="journal article" date="2010" name="Cell">
        <title>A tissue-specific atlas of mouse protein phosphorylation and expression.</title>
        <authorList>
            <person name="Huttlin E.L."/>
            <person name="Jedrychowski M.P."/>
            <person name="Elias J.E."/>
            <person name="Goswami T."/>
            <person name="Rad R."/>
            <person name="Beausoleil S.A."/>
            <person name="Villen J."/>
            <person name="Haas W."/>
            <person name="Sowa M.E."/>
            <person name="Gygi S.P."/>
        </authorList>
    </citation>
    <scope>IDENTIFICATION BY MASS SPECTROMETRY [LARGE SCALE ANALYSIS]</scope>
    <source>
        <tissue>Brain</tissue>
        <tissue>Liver</tissue>
        <tissue>Pancreas</tissue>
    </source>
</reference>
<comment type="function">
    <text evidence="1">Binds SECIS (Sec insertion sequence) elements present on selenocysteine (Sec) protein mRNAs, but does not promote Sec incorporation into selenoproteins.</text>
</comment>
<comment type="sequence caution" evidence="3">
    <conflict type="erroneous initiation">
        <sequence resource="EMBL-CDS" id="BAD32198"/>
    </conflict>
    <text>Extended N-terminus.</text>
</comment>
<sequence length="1086" mass="119641">MDRAPAEQNVKLSAEVEPFVPQKKNLDAFVLPMALPSDNGSVSGVEPTPIPSYLITCYPFVQENQSNRQFPLYNNDIRWQQPSPSPTGPYLAYPIISAQPPVSTEYTYYQLMPAPCAQVMGFYHPFPTPYSSTFQAANTVNAISTECTERPNQLGQAFPLSSHRSRNGNRGPVVPKPQLLQQHIKNKRPQVKNVATQKETSATGPDSRSKIVLLVDASQQTDFPSDIANKSLSESTATMLWKAKGRRRRASHPAVESSSEQGASEADIDSDSGYCSPKHNNQSAPGALRDPASGTMNRLESSGCSGGVNWPKVTCQATQKRPWMEKNQAFSRGGRQTEQRNNLQVGFRCRGHSTSSERRQNLQKRQDNKHLNSTQSHRSDPNSESLYFEDEDGFQELSENGNSKDENIQQKLSSKVLDDLPENSPINIVQTPIPITTSVPKRAKSQKKKALAAALATAQEYSEISKKSCRKLYQKQLEKTKTPVQLDLGDMLAALEKQQQAMKARQITNTRPLAHPVVTTATFHTKDSNRKTLAKSQPCVTSFNSLDITSSKAKKGKEKEIAKLKRPTALKKVILKEREEKKGRLIVEHSVLGAEEPTETHLDLTNDLPQETVSQEDAGLSMPSDASLSPASQNSPYCMTPVSQGSPASSGIGSPMASSTITKIHSKRFREYCNQVLSKEIDECVTLLLQELVSFQERIYQKDPVRAKARRRLVMGLREVTKHMKLNKIKCVIISPNCEKIQSKGGLDEALYNVIAMAREQEIPFVFALGRKALGRCVNKLVPVSVVGIFNYFGAESLFNRLVELTEEARKAYKDMVAATEQEQAEEALRSVKTVPHHMGHSRNPSAASAISFCSVISEPISEVNEKEYETNWRSMVETSDGLEPSEMEKAAPCTHSPPEKPSRLALDTSLVGKQLPLAAGSITSAPSQGKPTGDKDELKPDDLEWASQQSTETGSLDGSCRDLLNSSITSTTSTLVPGMLEEEEDEEEEEEDYSHEPTAEEVQLNSRIESWVSETQRTMETLQLGKALPGSEEDSAEQSGEEAAEVPEGLESGADSETWTPDQPPKPSSNMGKEHPDSSSPPQST</sequence>
<accession>Q6A098</accession>
<gene>
    <name type="primary">Secisbp2l</name>
    <name type="synonym">Kiaa0256</name>
</gene>
<keyword id="KW-0597">Phosphoprotein</keyword>
<keyword id="KW-1185">Reference proteome</keyword>
<organism>
    <name type="scientific">Mus musculus</name>
    <name type="common">Mouse</name>
    <dbReference type="NCBI Taxonomy" id="10090"/>
    <lineage>
        <taxon>Eukaryota</taxon>
        <taxon>Metazoa</taxon>
        <taxon>Chordata</taxon>
        <taxon>Craniata</taxon>
        <taxon>Vertebrata</taxon>
        <taxon>Euteleostomi</taxon>
        <taxon>Mammalia</taxon>
        <taxon>Eutheria</taxon>
        <taxon>Euarchontoglires</taxon>
        <taxon>Glires</taxon>
        <taxon>Rodentia</taxon>
        <taxon>Myomorpha</taxon>
        <taxon>Muroidea</taxon>
        <taxon>Muridae</taxon>
        <taxon>Murinae</taxon>
        <taxon>Mus</taxon>
        <taxon>Mus</taxon>
    </lineage>
</organism>
<evidence type="ECO:0000250" key="1"/>
<evidence type="ECO:0000256" key="2">
    <source>
        <dbReference type="SAM" id="MobiDB-lite"/>
    </source>
</evidence>
<evidence type="ECO:0000305" key="3"/>
<evidence type="ECO:0007744" key="4">
    <source>
    </source>
</evidence>
<name>SBP2L_MOUSE</name>
<proteinExistence type="evidence at protein level"/>
<feature type="chain" id="PRO_0000050740" description="Selenocysteine insertion sequence-binding protein 2-like">
    <location>
        <begin position="1"/>
        <end position="1086"/>
    </location>
</feature>
<feature type="region of interest" description="Disordered" evidence="2">
    <location>
        <begin position="155"/>
        <end position="207"/>
    </location>
</feature>
<feature type="region of interest" description="Disordered" evidence="2">
    <location>
        <begin position="243"/>
        <end position="386"/>
    </location>
</feature>
<feature type="region of interest" description="Disordered" evidence="2">
    <location>
        <begin position="615"/>
        <end position="657"/>
    </location>
</feature>
<feature type="region of interest" description="Disordered" evidence="2">
    <location>
        <begin position="880"/>
        <end position="904"/>
    </location>
</feature>
<feature type="region of interest" description="Disordered" evidence="2">
    <location>
        <begin position="919"/>
        <end position="1086"/>
    </location>
</feature>
<feature type="compositionally biased region" description="Polar residues" evidence="2">
    <location>
        <begin position="193"/>
        <end position="206"/>
    </location>
</feature>
<feature type="compositionally biased region" description="Polar residues" evidence="2">
    <location>
        <begin position="294"/>
        <end position="303"/>
    </location>
</feature>
<feature type="compositionally biased region" description="Polar residues" evidence="2">
    <location>
        <begin position="328"/>
        <end position="344"/>
    </location>
</feature>
<feature type="compositionally biased region" description="Basic and acidic residues" evidence="2">
    <location>
        <begin position="355"/>
        <end position="370"/>
    </location>
</feature>
<feature type="compositionally biased region" description="Polar residues" evidence="2">
    <location>
        <begin position="624"/>
        <end position="657"/>
    </location>
</feature>
<feature type="compositionally biased region" description="Polar residues" evidence="2">
    <location>
        <begin position="922"/>
        <end position="931"/>
    </location>
</feature>
<feature type="compositionally biased region" description="Basic and acidic residues" evidence="2">
    <location>
        <begin position="933"/>
        <end position="943"/>
    </location>
</feature>
<feature type="compositionally biased region" description="Polar residues" evidence="2">
    <location>
        <begin position="947"/>
        <end position="957"/>
    </location>
</feature>
<feature type="compositionally biased region" description="Acidic residues" evidence="2">
    <location>
        <begin position="981"/>
        <end position="994"/>
    </location>
</feature>
<feature type="compositionally biased region" description="Polar residues" evidence="2">
    <location>
        <begin position="1004"/>
        <end position="1022"/>
    </location>
</feature>
<feature type="compositionally biased region" description="Acidic residues" evidence="2">
    <location>
        <begin position="1032"/>
        <end position="1046"/>
    </location>
</feature>
<feature type="modified residue" description="Phosphoserine" evidence="4">
    <location>
        <position position="276"/>
    </location>
</feature>
<protein>
    <recommendedName>
        <fullName>Selenocysteine insertion sequence-binding protein 2-like</fullName>
        <shortName>SECIS-binding protein 2-like</shortName>
    </recommendedName>
</protein>